<keyword id="KW-0131">Cell cycle</keyword>
<keyword id="KW-0132">Cell division</keyword>
<keyword id="KW-1185">Reference proteome</keyword>
<comment type="function">
    <text evidence="1">Prevents the cell division inhibition by proteins MinC and MinD at internal division sites while permitting inhibition at polar sites. This ensures cell division at the proper site by restricting the formation of a division septum at the midpoint of the long axis of the cell.</text>
</comment>
<comment type="similarity">
    <text evidence="1">Belongs to the MinE family.</text>
</comment>
<evidence type="ECO:0000255" key="1">
    <source>
        <dbReference type="HAMAP-Rule" id="MF_00262"/>
    </source>
</evidence>
<organism>
    <name type="scientific">Thermoanaerobacter pseudethanolicus (strain ATCC 33223 / 39E)</name>
    <name type="common">Clostridium thermohydrosulfuricum</name>
    <dbReference type="NCBI Taxonomy" id="340099"/>
    <lineage>
        <taxon>Bacteria</taxon>
        <taxon>Bacillati</taxon>
        <taxon>Bacillota</taxon>
        <taxon>Clostridia</taxon>
        <taxon>Thermoanaerobacterales</taxon>
        <taxon>Thermoanaerobacteraceae</taxon>
        <taxon>Thermoanaerobacter</taxon>
    </lineage>
</organism>
<proteinExistence type="inferred from homology"/>
<sequence>MDLFKSFGGKNNSKNIAKERLQLLLVHDRADVSPKFLEMIKEDILNVISNYVDIDEAGLNVEITKEKRSDNTYIPALHANIPIKKMKQVIR</sequence>
<name>MINE_THEP3</name>
<reference key="1">
    <citation type="submission" date="2008-01" db="EMBL/GenBank/DDBJ databases">
        <title>Complete sequence of Thermoanaerobacter pseudethanolicus 39E.</title>
        <authorList>
            <person name="Copeland A."/>
            <person name="Lucas S."/>
            <person name="Lapidus A."/>
            <person name="Barry K."/>
            <person name="Glavina del Rio T."/>
            <person name="Dalin E."/>
            <person name="Tice H."/>
            <person name="Pitluck S."/>
            <person name="Bruce D."/>
            <person name="Goodwin L."/>
            <person name="Saunders E."/>
            <person name="Brettin T."/>
            <person name="Detter J.C."/>
            <person name="Han C."/>
            <person name="Schmutz J."/>
            <person name="Larimer F."/>
            <person name="Land M."/>
            <person name="Hauser L."/>
            <person name="Kyrpides N."/>
            <person name="Lykidis A."/>
            <person name="Hemme C."/>
            <person name="Fields M.W."/>
            <person name="He Z."/>
            <person name="Zhou J."/>
            <person name="Richardson P."/>
        </authorList>
    </citation>
    <scope>NUCLEOTIDE SEQUENCE [LARGE SCALE GENOMIC DNA]</scope>
    <source>
        <strain>ATCC 33223 / DSM 2355 / 39E</strain>
    </source>
</reference>
<feature type="chain" id="PRO_1000114249" description="Cell division topological specificity factor">
    <location>
        <begin position="1"/>
        <end position="91"/>
    </location>
</feature>
<dbReference type="EMBL" id="CP000924">
    <property type="protein sequence ID" value="ABY95096.1"/>
    <property type="molecule type" value="Genomic_DNA"/>
</dbReference>
<dbReference type="RefSeq" id="WP_003866921.1">
    <property type="nucleotide sequence ID" value="NC_010321.1"/>
</dbReference>
<dbReference type="SMR" id="B0KAD3"/>
<dbReference type="STRING" id="340099.Teth39_1446"/>
<dbReference type="KEGG" id="tpd:Teth39_1446"/>
<dbReference type="eggNOG" id="COG0851">
    <property type="taxonomic scope" value="Bacteria"/>
</dbReference>
<dbReference type="HOGENOM" id="CLU_137929_1_1_9"/>
<dbReference type="Proteomes" id="UP000002156">
    <property type="component" value="Chromosome"/>
</dbReference>
<dbReference type="GO" id="GO:0051301">
    <property type="term" value="P:cell division"/>
    <property type="evidence" value="ECO:0007669"/>
    <property type="project" value="UniProtKB-KW"/>
</dbReference>
<dbReference type="GO" id="GO:0032955">
    <property type="term" value="P:regulation of division septum assembly"/>
    <property type="evidence" value="ECO:0007669"/>
    <property type="project" value="InterPro"/>
</dbReference>
<dbReference type="Gene3D" id="3.30.1070.10">
    <property type="entry name" value="Cell division topological specificity factor MinE"/>
    <property type="match status" value="1"/>
</dbReference>
<dbReference type="HAMAP" id="MF_00262">
    <property type="entry name" value="MinE"/>
    <property type="match status" value="1"/>
</dbReference>
<dbReference type="InterPro" id="IPR005527">
    <property type="entry name" value="MinE"/>
</dbReference>
<dbReference type="InterPro" id="IPR036707">
    <property type="entry name" value="MinE_sf"/>
</dbReference>
<dbReference type="NCBIfam" id="TIGR01215">
    <property type="entry name" value="minE"/>
    <property type="match status" value="1"/>
</dbReference>
<dbReference type="NCBIfam" id="NF001422">
    <property type="entry name" value="PRK00296.1"/>
    <property type="match status" value="1"/>
</dbReference>
<dbReference type="Pfam" id="PF03776">
    <property type="entry name" value="MinE"/>
    <property type="match status" value="1"/>
</dbReference>
<dbReference type="SUPFAM" id="SSF55229">
    <property type="entry name" value="Cell division protein MinE topological specificity domain"/>
    <property type="match status" value="1"/>
</dbReference>
<accession>B0KAD3</accession>
<protein>
    <recommendedName>
        <fullName evidence="1">Cell division topological specificity factor</fullName>
    </recommendedName>
</protein>
<gene>
    <name evidence="1" type="primary">minE</name>
    <name type="ordered locus">Teth39_1446</name>
</gene>